<dbReference type="EC" id="3.2.2.n1"/>
<dbReference type="EMBL" id="AP008208">
    <property type="status" value="NOT_ANNOTATED_CDS"/>
    <property type="molecule type" value="Genomic_DNA"/>
</dbReference>
<dbReference type="EMBL" id="AP014958">
    <property type="protein sequence ID" value="BAS79874.1"/>
    <property type="molecule type" value="Genomic_DNA"/>
</dbReference>
<dbReference type="EMBL" id="CM000139">
    <property type="protein sequence ID" value="EEE57408.1"/>
    <property type="molecule type" value="Genomic_DNA"/>
</dbReference>
<dbReference type="SMR" id="B9F166"/>
<dbReference type="FunCoup" id="B9F166">
    <property type="interactions" value="22"/>
</dbReference>
<dbReference type="STRING" id="39947.B9F166"/>
<dbReference type="PaxDb" id="39947-B9F166"/>
<dbReference type="EnsemblPlants" id="Os02t0628000-00">
    <property type="protein sequence ID" value="Os02t0628000-00"/>
    <property type="gene ID" value="Os02g0628000"/>
</dbReference>
<dbReference type="GeneID" id="107275650"/>
<dbReference type="Gramene" id="Os02t0628000-00">
    <property type="protein sequence ID" value="Os02t0628000-00"/>
    <property type="gene ID" value="Os02g0628000"/>
</dbReference>
<dbReference type="KEGG" id="osa:107275650"/>
<dbReference type="eggNOG" id="ENOG502QSR9">
    <property type="taxonomic scope" value="Eukaryota"/>
</dbReference>
<dbReference type="HOGENOM" id="CLU_058336_2_0_1"/>
<dbReference type="InParanoid" id="B9F166"/>
<dbReference type="OMA" id="TLVWGGS"/>
<dbReference type="OrthoDB" id="414463at2759"/>
<dbReference type="Proteomes" id="UP000000763">
    <property type="component" value="Chromosome 2"/>
</dbReference>
<dbReference type="Proteomes" id="UP000007752">
    <property type="component" value="Chromosome 2"/>
</dbReference>
<dbReference type="Proteomes" id="UP000059680">
    <property type="component" value="Chromosome 2"/>
</dbReference>
<dbReference type="GO" id="GO:0005829">
    <property type="term" value="C:cytosol"/>
    <property type="evidence" value="ECO:0000318"/>
    <property type="project" value="GO_Central"/>
</dbReference>
<dbReference type="GO" id="GO:0005634">
    <property type="term" value="C:nucleus"/>
    <property type="evidence" value="ECO:0000318"/>
    <property type="project" value="GO_Central"/>
</dbReference>
<dbReference type="GO" id="GO:0102682">
    <property type="term" value="F:cytokinin riboside 5'-monophosphate phosphoribohydrolase activity"/>
    <property type="evidence" value="ECO:0000318"/>
    <property type="project" value="GO_Central"/>
</dbReference>
<dbReference type="GO" id="GO:0009691">
    <property type="term" value="P:cytokinin biosynthetic process"/>
    <property type="evidence" value="ECO:0000318"/>
    <property type="project" value="GO_Central"/>
</dbReference>
<dbReference type="FunFam" id="3.40.50.450:FF:000005">
    <property type="entry name" value="CASP-like protein"/>
    <property type="match status" value="1"/>
</dbReference>
<dbReference type="Gene3D" id="3.40.50.450">
    <property type="match status" value="1"/>
</dbReference>
<dbReference type="InterPro" id="IPR005269">
    <property type="entry name" value="LOG"/>
</dbReference>
<dbReference type="InterPro" id="IPR031100">
    <property type="entry name" value="LOG_fam"/>
</dbReference>
<dbReference type="NCBIfam" id="TIGR00730">
    <property type="entry name" value="Rossman fold protein, TIGR00730 family"/>
    <property type="match status" value="1"/>
</dbReference>
<dbReference type="PANTHER" id="PTHR31223:SF87">
    <property type="entry name" value="CYTOKININ RIBOSIDE 5'-MONOPHOSPHATE PHOSPHORIBOHYDROLASE LOGL2-RELATED"/>
    <property type="match status" value="1"/>
</dbReference>
<dbReference type="PANTHER" id="PTHR31223">
    <property type="entry name" value="LOG FAMILY PROTEIN YJL055W"/>
    <property type="match status" value="1"/>
</dbReference>
<dbReference type="Pfam" id="PF03641">
    <property type="entry name" value="Lysine_decarbox"/>
    <property type="match status" value="1"/>
</dbReference>
<dbReference type="SUPFAM" id="SSF102405">
    <property type="entry name" value="MCP/YpsA-like"/>
    <property type="match status" value="1"/>
</dbReference>
<evidence type="ECO:0000250" key="1"/>
<evidence type="ECO:0000250" key="2">
    <source>
        <dbReference type="UniProtKB" id="B2HS63"/>
    </source>
</evidence>
<evidence type="ECO:0000305" key="3"/>
<organism>
    <name type="scientific">Oryza sativa subsp. japonica</name>
    <name type="common">Rice</name>
    <dbReference type="NCBI Taxonomy" id="39947"/>
    <lineage>
        <taxon>Eukaryota</taxon>
        <taxon>Viridiplantae</taxon>
        <taxon>Streptophyta</taxon>
        <taxon>Embryophyta</taxon>
        <taxon>Tracheophyta</taxon>
        <taxon>Spermatophyta</taxon>
        <taxon>Magnoliopsida</taxon>
        <taxon>Liliopsida</taxon>
        <taxon>Poales</taxon>
        <taxon>Poaceae</taxon>
        <taxon>BOP clade</taxon>
        <taxon>Oryzoideae</taxon>
        <taxon>Oryzeae</taxon>
        <taxon>Oryzinae</taxon>
        <taxon>Oryza</taxon>
        <taxon>Oryza sativa</taxon>
    </lineage>
</organism>
<accession>B9F166</accession>
<accession>A0A0P0VLX1</accession>
<comment type="function">
    <text evidence="1">Cytokinin-activating enzyme working in the direct activation pathway. Phosphoribohydrolase that converts inactive cytokinin nucleotides to the biologically active free-base forms (By similarity).</text>
</comment>
<comment type="catalytic activity">
    <reaction>
        <text>N(6)-(dimethylallyl)adenosine 5'-phosphate + H2O = N(6)-dimethylallyladenine + D-ribose 5-phosphate</text>
        <dbReference type="Rhea" id="RHEA:48560"/>
        <dbReference type="ChEBI" id="CHEBI:15377"/>
        <dbReference type="ChEBI" id="CHEBI:17660"/>
        <dbReference type="ChEBI" id="CHEBI:57526"/>
        <dbReference type="ChEBI" id="CHEBI:78346"/>
        <dbReference type="EC" id="3.2.2.n1"/>
    </reaction>
</comment>
<comment type="catalytic activity">
    <reaction>
        <text>9-ribosyl-trans-zeatin 5'-phosphate + H2O = trans-zeatin + D-ribose 5-phosphate</text>
        <dbReference type="Rhea" id="RHEA:48564"/>
        <dbReference type="ChEBI" id="CHEBI:15377"/>
        <dbReference type="ChEBI" id="CHEBI:16522"/>
        <dbReference type="ChEBI" id="CHEBI:78346"/>
        <dbReference type="ChEBI" id="CHEBI:87947"/>
        <dbReference type="EC" id="3.2.2.n1"/>
    </reaction>
</comment>
<comment type="similarity">
    <text evidence="3">Belongs to the LOG family.</text>
</comment>
<proteinExistence type="inferred from homology"/>
<keyword id="KW-0203">Cytokinin biosynthesis</keyword>
<keyword id="KW-0378">Hydrolase</keyword>
<keyword id="KW-1185">Reference proteome</keyword>
<sequence>MEIKDEETTAEVAMVVQSRFRRVCVFCGSSHGKKKIYQDAAIELGKELVARNIDLVYGGGSVGLMGLVSQAVHNGGRHVIGVIPKTLMPREISGETVGEVKAVSDMHQRKAEMARQSDAFIALPGGYGTLEELLEVIAWAQLGIHDKPVGLLNVDGYYNPLLSFIDKAVEEGFIRPSARHIIVLAPTPKELIEKLEEYSPQHEKVVSKMKWEMEQMSYPQNYDIPRPKEGKMIIEAQRGSRLWM</sequence>
<protein>
    <recommendedName>
        <fullName>Probable cytokinin riboside 5'-monophosphate phosphoribohydrolase LOGL2</fullName>
        <ecNumber>3.2.2.n1</ecNumber>
    </recommendedName>
    <alternativeName>
        <fullName>Protein LONELY GUY-like 2</fullName>
    </alternativeName>
</protein>
<feature type="chain" id="PRO_0000395054" description="Probable cytokinin riboside 5'-monophosphate phosphoribohydrolase LOGL2">
    <location>
        <begin position="1"/>
        <end position="244"/>
    </location>
</feature>
<feature type="binding site" evidence="2">
    <location>
        <position position="91"/>
    </location>
    <ligand>
        <name>substrate</name>
    </ligand>
</feature>
<feature type="binding site" evidence="2">
    <location>
        <begin position="109"/>
        <end position="110"/>
    </location>
    <ligand>
        <name>substrate</name>
    </ligand>
</feature>
<feature type="binding site" evidence="2">
    <location>
        <begin position="126"/>
        <end position="132"/>
    </location>
    <ligand>
        <name>substrate</name>
    </ligand>
</feature>
<gene>
    <name type="primary">LOGL2</name>
    <name type="ordered locus">Os02g0628000</name>
    <name type="ordered locus">LOC_Os02g41770</name>
    <name type="ORF">OsJ_07599</name>
</gene>
<name>LOGL2_ORYSJ</name>
<reference key="1">
    <citation type="journal article" date="2005" name="Nature">
        <title>The map-based sequence of the rice genome.</title>
        <authorList>
            <consortium name="International rice genome sequencing project (IRGSP)"/>
        </authorList>
    </citation>
    <scope>NUCLEOTIDE SEQUENCE [LARGE SCALE GENOMIC DNA]</scope>
    <source>
        <strain>cv. Nipponbare</strain>
    </source>
</reference>
<reference key="2">
    <citation type="journal article" date="2008" name="Nucleic Acids Res.">
        <title>The rice annotation project database (RAP-DB): 2008 update.</title>
        <authorList>
            <consortium name="The rice annotation project (RAP)"/>
        </authorList>
    </citation>
    <scope>GENOME REANNOTATION</scope>
    <source>
        <strain>cv. Nipponbare</strain>
    </source>
</reference>
<reference key="3">
    <citation type="journal article" date="2013" name="Rice">
        <title>Improvement of the Oryza sativa Nipponbare reference genome using next generation sequence and optical map data.</title>
        <authorList>
            <person name="Kawahara Y."/>
            <person name="de la Bastide M."/>
            <person name="Hamilton J.P."/>
            <person name="Kanamori H."/>
            <person name="McCombie W.R."/>
            <person name="Ouyang S."/>
            <person name="Schwartz D.C."/>
            <person name="Tanaka T."/>
            <person name="Wu J."/>
            <person name="Zhou S."/>
            <person name="Childs K.L."/>
            <person name="Davidson R.M."/>
            <person name="Lin H."/>
            <person name="Quesada-Ocampo L."/>
            <person name="Vaillancourt B."/>
            <person name="Sakai H."/>
            <person name="Lee S.S."/>
            <person name="Kim J."/>
            <person name="Numa H."/>
            <person name="Itoh T."/>
            <person name="Buell C.R."/>
            <person name="Matsumoto T."/>
        </authorList>
    </citation>
    <scope>GENOME REANNOTATION</scope>
    <source>
        <strain>cv. Nipponbare</strain>
    </source>
</reference>
<reference key="4">
    <citation type="journal article" date="2005" name="PLoS Biol.">
        <title>The genomes of Oryza sativa: a history of duplications.</title>
        <authorList>
            <person name="Yu J."/>
            <person name="Wang J."/>
            <person name="Lin W."/>
            <person name="Li S."/>
            <person name="Li H."/>
            <person name="Zhou J."/>
            <person name="Ni P."/>
            <person name="Dong W."/>
            <person name="Hu S."/>
            <person name="Zeng C."/>
            <person name="Zhang J."/>
            <person name="Zhang Y."/>
            <person name="Li R."/>
            <person name="Xu Z."/>
            <person name="Li S."/>
            <person name="Li X."/>
            <person name="Zheng H."/>
            <person name="Cong L."/>
            <person name="Lin L."/>
            <person name="Yin J."/>
            <person name="Geng J."/>
            <person name="Li G."/>
            <person name="Shi J."/>
            <person name="Liu J."/>
            <person name="Lv H."/>
            <person name="Li J."/>
            <person name="Wang J."/>
            <person name="Deng Y."/>
            <person name="Ran L."/>
            <person name="Shi X."/>
            <person name="Wang X."/>
            <person name="Wu Q."/>
            <person name="Li C."/>
            <person name="Ren X."/>
            <person name="Wang J."/>
            <person name="Wang X."/>
            <person name="Li D."/>
            <person name="Liu D."/>
            <person name="Zhang X."/>
            <person name="Ji Z."/>
            <person name="Zhao W."/>
            <person name="Sun Y."/>
            <person name="Zhang Z."/>
            <person name="Bao J."/>
            <person name="Han Y."/>
            <person name="Dong L."/>
            <person name="Ji J."/>
            <person name="Chen P."/>
            <person name="Wu S."/>
            <person name="Liu J."/>
            <person name="Xiao Y."/>
            <person name="Bu D."/>
            <person name="Tan J."/>
            <person name="Yang L."/>
            <person name="Ye C."/>
            <person name="Zhang J."/>
            <person name="Xu J."/>
            <person name="Zhou Y."/>
            <person name="Yu Y."/>
            <person name="Zhang B."/>
            <person name="Zhuang S."/>
            <person name="Wei H."/>
            <person name="Liu B."/>
            <person name="Lei M."/>
            <person name="Yu H."/>
            <person name="Li Y."/>
            <person name="Xu H."/>
            <person name="Wei S."/>
            <person name="He X."/>
            <person name="Fang L."/>
            <person name="Zhang Z."/>
            <person name="Zhang Y."/>
            <person name="Huang X."/>
            <person name="Su Z."/>
            <person name="Tong W."/>
            <person name="Li J."/>
            <person name="Tong Z."/>
            <person name="Li S."/>
            <person name="Ye J."/>
            <person name="Wang L."/>
            <person name="Fang L."/>
            <person name="Lei T."/>
            <person name="Chen C.-S."/>
            <person name="Chen H.-C."/>
            <person name="Xu Z."/>
            <person name="Li H."/>
            <person name="Huang H."/>
            <person name="Zhang F."/>
            <person name="Xu H."/>
            <person name="Li N."/>
            <person name="Zhao C."/>
            <person name="Li S."/>
            <person name="Dong L."/>
            <person name="Huang Y."/>
            <person name="Li L."/>
            <person name="Xi Y."/>
            <person name="Qi Q."/>
            <person name="Li W."/>
            <person name="Zhang B."/>
            <person name="Hu W."/>
            <person name="Zhang Y."/>
            <person name="Tian X."/>
            <person name="Jiao Y."/>
            <person name="Liang X."/>
            <person name="Jin J."/>
            <person name="Gao L."/>
            <person name="Zheng W."/>
            <person name="Hao B."/>
            <person name="Liu S.-M."/>
            <person name="Wang W."/>
            <person name="Yuan L."/>
            <person name="Cao M."/>
            <person name="McDermott J."/>
            <person name="Samudrala R."/>
            <person name="Wang J."/>
            <person name="Wong G.K.-S."/>
            <person name="Yang H."/>
        </authorList>
    </citation>
    <scope>NUCLEOTIDE SEQUENCE [LARGE SCALE GENOMIC DNA]</scope>
    <source>
        <strain>cv. Nipponbare</strain>
    </source>
</reference>
<reference key="5">
    <citation type="journal article" date="2009" name="Plant Cell">
        <title>Functional analyses of LONELY GUY cytokinin-activating enzymes reveal the importance of the direct activation pathway in Arabidopsis.</title>
        <authorList>
            <person name="Kuroha T."/>
            <person name="Tokunaga H."/>
            <person name="Kojima M."/>
            <person name="Ueda N."/>
            <person name="Ishida T."/>
            <person name="Nagawa S."/>
            <person name="Fukuda H."/>
            <person name="Sugimoto K."/>
            <person name="Sakakibara H."/>
        </authorList>
    </citation>
    <scope>GENE FAMILY</scope>
    <scope>NOMENCLATURE</scope>
</reference>